<sequence>MNRTRPLPEIKMVSANKTASILEERTGHRFLNLKRLERALTHSSVQAPARANYERLEFLGDRVLGLTVAEMLFEAFPEASEGELSVRLNALVNAETCAAIADEIGLADLIHTGSDIKSLNDKRLLNVRADVVEALIATIYLDGGLEAARSFIQRYWKKRSLETGAARRDAKTELQEWAHQQGNVHPVYAILSRSGPDHDPLFLVEVTVKGFAPEKGEGRSKRIAEQSAAEAMLYREGVWKRDGSA</sequence>
<evidence type="ECO:0000255" key="1">
    <source>
        <dbReference type="HAMAP-Rule" id="MF_00104"/>
    </source>
</evidence>
<feature type="chain" id="PRO_1000075730" description="Ribonuclease 3">
    <location>
        <begin position="1"/>
        <end position="245"/>
    </location>
</feature>
<feature type="domain" description="RNase III" evidence="1">
    <location>
        <begin position="19"/>
        <end position="144"/>
    </location>
</feature>
<feature type="domain" description="DRBM" evidence="1">
    <location>
        <begin position="169"/>
        <end position="238"/>
    </location>
</feature>
<feature type="active site" evidence="1">
    <location>
        <position position="61"/>
    </location>
</feature>
<feature type="active site" evidence="1">
    <location>
        <position position="133"/>
    </location>
</feature>
<feature type="binding site" evidence="1">
    <location>
        <position position="57"/>
    </location>
    <ligand>
        <name>Mg(2+)</name>
        <dbReference type="ChEBI" id="CHEBI:18420"/>
    </ligand>
</feature>
<feature type="binding site" evidence="1">
    <location>
        <position position="130"/>
    </location>
    <ligand>
        <name>Mg(2+)</name>
        <dbReference type="ChEBI" id="CHEBI:18420"/>
    </ligand>
</feature>
<feature type="binding site" evidence="1">
    <location>
        <position position="133"/>
    </location>
    <ligand>
        <name>Mg(2+)</name>
        <dbReference type="ChEBI" id="CHEBI:18420"/>
    </ligand>
</feature>
<comment type="function">
    <text evidence="1">Digests double-stranded RNA. Involved in the processing of primary rRNA transcript to yield the immediate precursors to the large and small rRNAs (23S and 16S). Processes some mRNAs, and tRNAs when they are encoded in the rRNA operon. Processes pre-crRNA and tracrRNA of type II CRISPR loci if present in the organism.</text>
</comment>
<comment type="catalytic activity">
    <reaction evidence="1">
        <text>Endonucleolytic cleavage to 5'-phosphomonoester.</text>
        <dbReference type="EC" id="3.1.26.3"/>
    </reaction>
</comment>
<comment type="cofactor">
    <cofactor evidence="1">
        <name>Mg(2+)</name>
        <dbReference type="ChEBI" id="CHEBI:18420"/>
    </cofactor>
</comment>
<comment type="subunit">
    <text evidence="1">Homodimer.</text>
</comment>
<comment type="subcellular location">
    <subcellularLocation>
        <location evidence="1">Cytoplasm</location>
    </subcellularLocation>
</comment>
<comment type="similarity">
    <text evidence="1">Belongs to the ribonuclease III family.</text>
</comment>
<gene>
    <name evidence="1" type="primary">rnc</name>
    <name type="ordered locus">BSUIS_A0689</name>
</gene>
<reference key="1">
    <citation type="submission" date="2007-12" db="EMBL/GenBank/DDBJ databases">
        <title>Brucella suis ATCC 23445 whole genome shotgun sequencing project.</title>
        <authorList>
            <person name="Setubal J.C."/>
            <person name="Bowns C."/>
            <person name="Boyle S."/>
            <person name="Crasta O.R."/>
            <person name="Czar M.J."/>
            <person name="Dharmanolla C."/>
            <person name="Gillespie J.J."/>
            <person name="Kenyon R.W."/>
            <person name="Lu J."/>
            <person name="Mane S."/>
            <person name="Mohapatra S."/>
            <person name="Nagrani S."/>
            <person name="Purkayastha A."/>
            <person name="Rajasimha H.K."/>
            <person name="Shallom J.M."/>
            <person name="Shallom S."/>
            <person name="Shukla M."/>
            <person name="Snyder E.E."/>
            <person name="Sobral B.W."/>
            <person name="Wattam A.R."/>
            <person name="Will R."/>
            <person name="Williams K."/>
            <person name="Yoo H."/>
            <person name="Bruce D."/>
            <person name="Detter C."/>
            <person name="Munk C."/>
            <person name="Brettin T.S."/>
        </authorList>
    </citation>
    <scope>NUCLEOTIDE SEQUENCE [LARGE SCALE GENOMIC DNA]</scope>
    <source>
        <strain>ATCC 23445 / NCTC 10510</strain>
    </source>
</reference>
<protein>
    <recommendedName>
        <fullName evidence="1">Ribonuclease 3</fullName>
        <ecNumber evidence="1">3.1.26.3</ecNumber>
    </recommendedName>
    <alternativeName>
        <fullName evidence="1">Ribonuclease III</fullName>
        <shortName evidence="1">RNase III</shortName>
    </alternativeName>
</protein>
<keyword id="KW-0963">Cytoplasm</keyword>
<keyword id="KW-0255">Endonuclease</keyword>
<keyword id="KW-0378">Hydrolase</keyword>
<keyword id="KW-0460">Magnesium</keyword>
<keyword id="KW-0479">Metal-binding</keyword>
<keyword id="KW-0507">mRNA processing</keyword>
<keyword id="KW-0540">Nuclease</keyword>
<keyword id="KW-0694">RNA-binding</keyword>
<keyword id="KW-0698">rRNA processing</keyword>
<keyword id="KW-0699">rRNA-binding</keyword>
<keyword id="KW-0819">tRNA processing</keyword>
<accession>B0CKY7</accession>
<dbReference type="EC" id="3.1.26.3" evidence="1"/>
<dbReference type="EMBL" id="CP000911">
    <property type="protein sequence ID" value="ABY37767.1"/>
    <property type="molecule type" value="Genomic_DNA"/>
</dbReference>
<dbReference type="SMR" id="B0CKY7"/>
<dbReference type="KEGG" id="bmt:BSUIS_A0689"/>
<dbReference type="HOGENOM" id="CLU_000907_1_1_5"/>
<dbReference type="Proteomes" id="UP000008545">
    <property type="component" value="Chromosome I"/>
</dbReference>
<dbReference type="GO" id="GO:0005737">
    <property type="term" value="C:cytoplasm"/>
    <property type="evidence" value="ECO:0007669"/>
    <property type="project" value="UniProtKB-SubCell"/>
</dbReference>
<dbReference type="GO" id="GO:0003725">
    <property type="term" value="F:double-stranded RNA binding"/>
    <property type="evidence" value="ECO:0007669"/>
    <property type="project" value="TreeGrafter"/>
</dbReference>
<dbReference type="GO" id="GO:0046872">
    <property type="term" value="F:metal ion binding"/>
    <property type="evidence" value="ECO:0007669"/>
    <property type="project" value="UniProtKB-KW"/>
</dbReference>
<dbReference type="GO" id="GO:0004525">
    <property type="term" value="F:ribonuclease III activity"/>
    <property type="evidence" value="ECO:0007669"/>
    <property type="project" value="UniProtKB-UniRule"/>
</dbReference>
<dbReference type="GO" id="GO:0019843">
    <property type="term" value="F:rRNA binding"/>
    <property type="evidence" value="ECO:0007669"/>
    <property type="project" value="UniProtKB-KW"/>
</dbReference>
<dbReference type="GO" id="GO:0006397">
    <property type="term" value="P:mRNA processing"/>
    <property type="evidence" value="ECO:0007669"/>
    <property type="project" value="UniProtKB-UniRule"/>
</dbReference>
<dbReference type="GO" id="GO:0010468">
    <property type="term" value="P:regulation of gene expression"/>
    <property type="evidence" value="ECO:0007669"/>
    <property type="project" value="TreeGrafter"/>
</dbReference>
<dbReference type="GO" id="GO:0006364">
    <property type="term" value="P:rRNA processing"/>
    <property type="evidence" value="ECO:0007669"/>
    <property type="project" value="UniProtKB-UniRule"/>
</dbReference>
<dbReference type="GO" id="GO:0008033">
    <property type="term" value="P:tRNA processing"/>
    <property type="evidence" value="ECO:0007669"/>
    <property type="project" value="UniProtKB-KW"/>
</dbReference>
<dbReference type="CDD" id="cd10845">
    <property type="entry name" value="DSRM_RNAse_III_family"/>
    <property type="match status" value="1"/>
</dbReference>
<dbReference type="CDD" id="cd00593">
    <property type="entry name" value="RIBOc"/>
    <property type="match status" value="1"/>
</dbReference>
<dbReference type="FunFam" id="3.30.160.20:FF:000003">
    <property type="entry name" value="Ribonuclease 3"/>
    <property type="match status" value="1"/>
</dbReference>
<dbReference type="Gene3D" id="3.30.160.20">
    <property type="match status" value="1"/>
</dbReference>
<dbReference type="Gene3D" id="1.10.1520.10">
    <property type="entry name" value="Ribonuclease III domain"/>
    <property type="match status" value="1"/>
</dbReference>
<dbReference type="HAMAP" id="MF_00104">
    <property type="entry name" value="RNase_III"/>
    <property type="match status" value="1"/>
</dbReference>
<dbReference type="InterPro" id="IPR014720">
    <property type="entry name" value="dsRBD_dom"/>
</dbReference>
<dbReference type="InterPro" id="IPR011907">
    <property type="entry name" value="RNase_III"/>
</dbReference>
<dbReference type="InterPro" id="IPR000999">
    <property type="entry name" value="RNase_III_dom"/>
</dbReference>
<dbReference type="InterPro" id="IPR036389">
    <property type="entry name" value="RNase_III_sf"/>
</dbReference>
<dbReference type="NCBIfam" id="TIGR02191">
    <property type="entry name" value="RNaseIII"/>
    <property type="match status" value="1"/>
</dbReference>
<dbReference type="PANTHER" id="PTHR11207:SF0">
    <property type="entry name" value="RIBONUCLEASE 3"/>
    <property type="match status" value="1"/>
</dbReference>
<dbReference type="PANTHER" id="PTHR11207">
    <property type="entry name" value="RIBONUCLEASE III"/>
    <property type="match status" value="1"/>
</dbReference>
<dbReference type="Pfam" id="PF00035">
    <property type="entry name" value="dsrm"/>
    <property type="match status" value="1"/>
</dbReference>
<dbReference type="Pfam" id="PF14622">
    <property type="entry name" value="Ribonucleas_3_3"/>
    <property type="match status" value="1"/>
</dbReference>
<dbReference type="SMART" id="SM00358">
    <property type="entry name" value="DSRM"/>
    <property type="match status" value="1"/>
</dbReference>
<dbReference type="SMART" id="SM00535">
    <property type="entry name" value="RIBOc"/>
    <property type="match status" value="1"/>
</dbReference>
<dbReference type="SUPFAM" id="SSF54768">
    <property type="entry name" value="dsRNA-binding domain-like"/>
    <property type="match status" value="1"/>
</dbReference>
<dbReference type="SUPFAM" id="SSF69065">
    <property type="entry name" value="RNase III domain-like"/>
    <property type="match status" value="1"/>
</dbReference>
<dbReference type="PROSITE" id="PS50137">
    <property type="entry name" value="DS_RBD"/>
    <property type="match status" value="1"/>
</dbReference>
<dbReference type="PROSITE" id="PS00517">
    <property type="entry name" value="RNASE_3_1"/>
    <property type="match status" value="1"/>
</dbReference>
<dbReference type="PROSITE" id="PS50142">
    <property type="entry name" value="RNASE_3_2"/>
    <property type="match status" value="1"/>
</dbReference>
<proteinExistence type="inferred from homology"/>
<name>RNC_BRUSI</name>
<organism>
    <name type="scientific">Brucella suis (strain ATCC 23445 / NCTC 10510)</name>
    <dbReference type="NCBI Taxonomy" id="470137"/>
    <lineage>
        <taxon>Bacteria</taxon>
        <taxon>Pseudomonadati</taxon>
        <taxon>Pseudomonadota</taxon>
        <taxon>Alphaproteobacteria</taxon>
        <taxon>Hyphomicrobiales</taxon>
        <taxon>Brucellaceae</taxon>
        <taxon>Brucella/Ochrobactrum group</taxon>
        <taxon>Brucella</taxon>
    </lineage>
</organism>